<name>RL4_SALTI</name>
<accession>P60727</accession>
<accession>P02388</accession>
<comment type="function">
    <text evidence="2">One of the primary rRNA binding proteins, this protein initially binds near the 5'-end of the 23S rRNA. It is important during the early stages of 50S assembly. It makes multiple contacts with different domains of the 23S rRNA in the assembled 50S subunit and ribosome.</text>
</comment>
<comment type="function">
    <text evidence="1">Protein L4 is a both a transcriptional repressor and a translational repressor protein. It regulates transcription of the S10 operon (to which L4 belongs) by causing premature termination of transcription within the S10 leader. L4 controls the translation of the S10 operon by binding to its mRNA (By similarity).</text>
</comment>
<comment type="function">
    <text evidence="2">Forms part of the polypeptide exit tunnel.</text>
</comment>
<comment type="subunit">
    <text evidence="2">Part of the 50S ribosomal subunit.</text>
</comment>
<comment type="similarity">
    <text evidence="2">Belongs to the universal ribosomal protein uL4 family.</text>
</comment>
<feature type="chain" id="PRO_0000129269" description="Large ribosomal subunit protein uL4">
    <location>
        <begin position="1"/>
        <end position="201"/>
    </location>
</feature>
<feature type="region of interest" description="Disordered" evidence="3">
    <location>
        <begin position="44"/>
        <end position="71"/>
    </location>
</feature>
<organism>
    <name type="scientific">Salmonella typhi</name>
    <dbReference type="NCBI Taxonomy" id="90370"/>
    <lineage>
        <taxon>Bacteria</taxon>
        <taxon>Pseudomonadati</taxon>
        <taxon>Pseudomonadota</taxon>
        <taxon>Gammaproteobacteria</taxon>
        <taxon>Enterobacterales</taxon>
        <taxon>Enterobacteriaceae</taxon>
        <taxon>Salmonella</taxon>
    </lineage>
</organism>
<keyword id="KW-0678">Repressor</keyword>
<keyword id="KW-0687">Ribonucleoprotein</keyword>
<keyword id="KW-0689">Ribosomal protein</keyword>
<keyword id="KW-0694">RNA-binding</keyword>
<keyword id="KW-0699">rRNA-binding</keyword>
<keyword id="KW-0804">Transcription</keyword>
<keyword id="KW-0805">Transcription regulation</keyword>
<keyword id="KW-0806">Transcription termination</keyword>
<keyword id="KW-0810">Translation regulation</keyword>
<sequence>MELVLKDAQSALTVSETTFGRDFNEALVHQVVVAYAAGARQGTRAQKTRAEVTGSGKKPWRQKGTGRARSGSIKSPIWRSGGVTFAARPQDHSQKVNKKMYRGALKSILSELVRQDRLIVVEKFSVEAPKTKLLAQKLKDMALEDVLIITGELDENLFLAARNLHKVDVRDATGIDPVSLIAFDKVVMTADAVKQVEEMLA</sequence>
<evidence type="ECO:0000250" key="1"/>
<evidence type="ECO:0000255" key="2">
    <source>
        <dbReference type="HAMAP-Rule" id="MF_01328"/>
    </source>
</evidence>
<evidence type="ECO:0000256" key="3">
    <source>
        <dbReference type="SAM" id="MobiDB-lite"/>
    </source>
</evidence>
<evidence type="ECO:0000305" key="4"/>
<gene>
    <name evidence="2" type="primary">rplD</name>
    <name type="ordered locus">STY4359</name>
    <name type="ordered locus">t4066</name>
</gene>
<dbReference type="EMBL" id="AL513382">
    <property type="protein sequence ID" value="CAD08174.1"/>
    <property type="molecule type" value="Genomic_DNA"/>
</dbReference>
<dbReference type="EMBL" id="AE014613">
    <property type="protein sequence ID" value="AAO71533.1"/>
    <property type="molecule type" value="Genomic_DNA"/>
</dbReference>
<dbReference type="RefSeq" id="NP_458461.1">
    <property type="nucleotide sequence ID" value="NC_003198.1"/>
</dbReference>
<dbReference type="RefSeq" id="WP_000424395.1">
    <property type="nucleotide sequence ID" value="NZ_WSUR01000046.1"/>
</dbReference>
<dbReference type="SMR" id="P60727"/>
<dbReference type="STRING" id="220341.gene:17588187"/>
<dbReference type="GeneID" id="97442859"/>
<dbReference type="KEGG" id="stt:t4066"/>
<dbReference type="KEGG" id="sty:STY4359"/>
<dbReference type="PATRIC" id="fig|220341.7.peg.4455"/>
<dbReference type="eggNOG" id="COG0088">
    <property type="taxonomic scope" value="Bacteria"/>
</dbReference>
<dbReference type="HOGENOM" id="CLU_041575_5_2_6"/>
<dbReference type="OMA" id="PQVHILE"/>
<dbReference type="OrthoDB" id="9803201at2"/>
<dbReference type="Proteomes" id="UP000000541">
    <property type="component" value="Chromosome"/>
</dbReference>
<dbReference type="Proteomes" id="UP000002670">
    <property type="component" value="Chromosome"/>
</dbReference>
<dbReference type="GO" id="GO:1990904">
    <property type="term" value="C:ribonucleoprotein complex"/>
    <property type="evidence" value="ECO:0007669"/>
    <property type="project" value="UniProtKB-KW"/>
</dbReference>
<dbReference type="GO" id="GO:0005840">
    <property type="term" value="C:ribosome"/>
    <property type="evidence" value="ECO:0007669"/>
    <property type="project" value="UniProtKB-KW"/>
</dbReference>
<dbReference type="GO" id="GO:0019843">
    <property type="term" value="F:rRNA binding"/>
    <property type="evidence" value="ECO:0007669"/>
    <property type="project" value="UniProtKB-UniRule"/>
</dbReference>
<dbReference type="GO" id="GO:0003735">
    <property type="term" value="F:structural constituent of ribosome"/>
    <property type="evidence" value="ECO:0007669"/>
    <property type="project" value="InterPro"/>
</dbReference>
<dbReference type="GO" id="GO:0006353">
    <property type="term" value="P:DNA-templated transcription termination"/>
    <property type="evidence" value="ECO:0007669"/>
    <property type="project" value="UniProtKB-KW"/>
</dbReference>
<dbReference type="GO" id="GO:0006417">
    <property type="term" value="P:regulation of translation"/>
    <property type="evidence" value="ECO:0007669"/>
    <property type="project" value="UniProtKB-KW"/>
</dbReference>
<dbReference type="GO" id="GO:0006412">
    <property type="term" value="P:translation"/>
    <property type="evidence" value="ECO:0007669"/>
    <property type="project" value="UniProtKB-UniRule"/>
</dbReference>
<dbReference type="FunFam" id="3.40.1370.10:FF:000001">
    <property type="entry name" value="50S ribosomal protein L4"/>
    <property type="match status" value="1"/>
</dbReference>
<dbReference type="Gene3D" id="3.40.1370.10">
    <property type="match status" value="1"/>
</dbReference>
<dbReference type="HAMAP" id="MF_01328_B">
    <property type="entry name" value="Ribosomal_uL4_B"/>
    <property type="match status" value="1"/>
</dbReference>
<dbReference type="InterPro" id="IPR002136">
    <property type="entry name" value="Ribosomal_uL4"/>
</dbReference>
<dbReference type="InterPro" id="IPR013005">
    <property type="entry name" value="Ribosomal_uL4-like"/>
</dbReference>
<dbReference type="InterPro" id="IPR023574">
    <property type="entry name" value="Ribosomal_uL4_dom_sf"/>
</dbReference>
<dbReference type="NCBIfam" id="TIGR03953">
    <property type="entry name" value="rplD_bact"/>
    <property type="match status" value="1"/>
</dbReference>
<dbReference type="PANTHER" id="PTHR10746">
    <property type="entry name" value="50S RIBOSOMAL PROTEIN L4"/>
    <property type="match status" value="1"/>
</dbReference>
<dbReference type="PANTHER" id="PTHR10746:SF6">
    <property type="entry name" value="LARGE RIBOSOMAL SUBUNIT PROTEIN UL4M"/>
    <property type="match status" value="1"/>
</dbReference>
<dbReference type="Pfam" id="PF00573">
    <property type="entry name" value="Ribosomal_L4"/>
    <property type="match status" value="1"/>
</dbReference>
<dbReference type="SUPFAM" id="SSF52166">
    <property type="entry name" value="Ribosomal protein L4"/>
    <property type="match status" value="1"/>
</dbReference>
<reference key="1">
    <citation type="journal article" date="2001" name="Nature">
        <title>Complete genome sequence of a multiple drug resistant Salmonella enterica serovar Typhi CT18.</title>
        <authorList>
            <person name="Parkhill J."/>
            <person name="Dougan G."/>
            <person name="James K.D."/>
            <person name="Thomson N.R."/>
            <person name="Pickard D."/>
            <person name="Wain J."/>
            <person name="Churcher C.M."/>
            <person name="Mungall K.L."/>
            <person name="Bentley S.D."/>
            <person name="Holden M.T.G."/>
            <person name="Sebaihia M."/>
            <person name="Baker S."/>
            <person name="Basham D."/>
            <person name="Brooks K."/>
            <person name="Chillingworth T."/>
            <person name="Connerton P."/>
            <person name="Cronin A."/>
            <person name="Davis P."/>
            <person name="Davies R.M."/>
            <person name="Dowd L."/>
            <person name="White N."/>
            <person name="Farrar J."/>
            <person name="Feltwell T."/>
            <person name="Hamlin N."/>
            <person name="Haque A."/>
            <person name="Hien T.T."/>
            <person name="Holroyd S."/>
            <person name="Jagels K."/>
            <person name="Krogh A."/>
            <person name="Larsen T.S."/>
            <person name="Leather S."/>
            <person name="Moule S."/>
            <person name="O'Gaora P."/>
            <person name="Parry C."/>
            <person name="Quail M.A."/>
            <person name="Rutherford K.M."/>
            <person name="Simmonds M."/>
            <person name="Skelton J."/>
            <person name="Stevens K."/>
            <person name="Whitehead S."/>
            <person name="Barrell B.G."/>
        </authorList>
    </citation>
    <scope>NUCLEOTIDE SEQUENCE [LARGE SCALE GENOMIC DNA]</scope>
    <source>
        <strain>CT18</strain>
    </source>
</reference>
<reference key="2">
    <citation type="journal article" date="2003" name="J. Bacteriol.">
        <title>Comparative genomics of Salmonella enterica serovar Typhi strains Ty2 and CT18.</title>
        <authorList>
            <person name="Deng W."/>
            <person name="Liou S.-R."/>
            <person name="Plunkett G. III"/>
            <person name="Mayhew G.F."/>
            <person name="Rose D.J."/>
            <person name="Burland V."/>
            <person name="Kodoyianni V."/>
            <person name="Schwartz D.C."/>
            <person name="Blattner F.R."/>
        </authorList>
    </citation>
    <scope>NUCLEOTIDE SEQUENCE [LARGE SCALE GENOMIC DNA]</scope>
    <source>
        <strain>ATCC 700931 / Ty2</strain>
    </source>
</reference>
<protein>
    <recommendedName>
        <fullName evidence="2">Large ribosomal subunit protein uL4</fullName>
    </recommendedName>
    <alternativeName>
        <fullName evidence="4">50S ribosomal protein L4</fullName>
    </alternativeName>
</protein>
<proteinExistence type="inferred from homology"/>